<evidence type="ECO:0000255" key="1">
    <source>
        <dbReference type="HAMAP-Rule" id="MF_00114"/>
    </source>
</evidence>
<protein>
    <recommendedName>
        <fullName evidence="1">Deoxyribose-phosphate aldolase</fullName>
        <shortName evidence="1">DERA</shortName>
        <ecNumber evidence="1">4.1.2.4</ecNumber>
    </recommendedName>
    <alternativeName>
        <fullName evidence="1">2-deoxy-D-ribose 5-phosphate aldolase</fullName>
    </alternativeName>
    <alternativeName>
        <fullName evidence="1">Phosphodeoxyriboaldolase</fullName>
        <shortName evidence="1">Deoxyriboaldolase</shortName>
    </alternativeName>
</protein>
<accession>B8ZNP4</accession>
<keyword id="KW-0963">Cytoplasm</keyword>
<keyword id="KW-0456">Lyase</keyword>
<keyword id="KW-0704">Schiff base</keyword>
<feature type="chain" id="PRO_1000189835" description="Deoxyribose-phosphate aldolase">
    <location>
        <begin position="1"/>
        <end position="220"/>
    </location>
</feature>
<feature type="active site" description="Proton donor/acceptor" evidence="1">
    <location>
        <position position="89"/>
    </location>
</feature>
<feature type="active site" description="Schiff-base intermediate with acetaldehyde" evidence="1">
    <location>
        <position position="151"/>
    </location>
</feature>
<feature type="active site" description="Proton donor/acceptor" evidence="1">
    <location>
        <position position="180"/>
    </location>
</feature>
<gene>
    <name evidence="1" type="primary">deoC</name>
    <name type="ordered locus">SPN23F07640</name>
</gene>
<dbReference type="EC" id="4.1.2.4" evidence="1"/>
<dbReference type="EMBL" id="FM211187">
    <property type="protein sequence ID" value="CAR68604.1"/>
    <property type="molecule type" value="Genomic_DNA"/>
</dbReference>
<dbReference type="RefSeq" id="WP_000773688.1">
    <property type="nucleotide sequence ID" value="NC_011900.1"/>
</dbReference>
<dbReference type="SMR" id="B8ZNP4"/>
<dbReference type="KEGG" id="sne:SPN23F07640"/>
<dbReference type="HOGENOM" id="CLU_053595_0_1_9"/>
<dbReference type="UniPathway" id="UPA00002">
    <property type="reaction ID" value="UER00468"/>
</dbReference>
<dbReference type="GO" id="GO:0005737">
    <property type="term" value="C:cytoplasm"/>
    <property type="evidence" value="ECO:0007669"/>
    <property type="project" value="UniProtKB-SubCell"/>
</dbReference>
<dbReference type="GO" id="GO:0004139">
    <property type="term" value="F:deoxyribose-phosphate aldolase activity"/>
    <property type="evidence" value="ECO:0007669"/>
    <property type="project" value="UniProtKB-UniRule"/>
</dbReference>
<dbReference type="GO" id="GO:0006018">
    <property type="term" value="P:2-deoxyribose 1-phosphate catabolic process"/>
    <property type="evidence" value="ECO:0007669"/>
    <property type="project" value="UniProtKB-UniRule"/>
</dbReference>
<dbReference type="GO" id="GO:0016052">
    <property type="term" value="P:carbohydrate catabolic process"/>
    <property type="evidence" value="ECO:0007669"/>
    <property type="project" value="TreeGrafter"/>
</dbReference>
<dbReference type="GO" id="GO:0009264">
    <property type="term" value="P:deoxyribonucleotide catabolic process"/>
    <property type="evidence" value="ECO:0007669"/>
    <property type="project" value="InterPro"/>
</dbReference>
<dbReference type="CDD" id="cd00959">
    <property type="entry name" value="DeoC"/>
    <property type="match status" value="1"/>
</dbReference>
<dbReference type="FunFam" id="3.20.20.70:FF:000044">
    <property type="entry name" value="Deoxyribose-phosphate aldolase"/>
    <property type="match status" value="1"/>
</dbReference>
<dbReference type="Gene3D" id="3.20.20.70">
    <property type="entry name" value="Aldolase class I"/>
    <property type="match status" value="1"/>
</dbReference>
<dbReference type="HAMAP" id="MF_00114">
    <property type="entry name" value="DeoC_type1"/>
    <property type="match status" value="1"/>
</dbReference>
<dbReference type="InterPro" id="IPR013785">
    <property type="entry name" value="Aldolase_TIM"/>
</dbReference>
<dbReference type="InterPro" id="IPR011343">
    <property type="entry name" value="DeoC"/>
</dbReference>
<dbReference type="InterPro" id="IPR002915">
    <property type="entry name" value="DeoC/FbaB/LacD_aldolase"/>
</dbReference>
<dbReference type="InterPro" id="IPR028581">
    <property type="entry name" value="DeoC_typeI"/>
</dbReference>
<dbReference type="NCBIfam" id="TIGR00126">
    <property type="entry name" value="deoC"/>
    <property type="match status" value="1"/>
</dbReference>
<dbReference type="PANTHER" id="PTHR10889">
    <property type="entry name" value="DEOXYRIBOSE-PHOSPHATE ALDOLASE"/>
    <property type="match status" value="1"/>
</dbReference>
<dbReference type="PANTHER" id="PTHR10889:SF1">
    <property type="entry name" value="DEOXYRIBOSE-PHOSPHATE ALDOLASE"/>
    <property type="match status" value="1"/>
</dbReference>
<dbReference type="Pfam" id="PF01791">
    <property type="entry name" value="DeoC"/>
    <property type="match status" value="1"/>
</dbReference>
<dbReference type="PIRSF" id="PIRSF001357">
    <property type="entry name" value="DeoC"/>
    <property type="match status" value="1"/>
</dbReference>
<dbReference type="SMART" id="SM01133">
    <property type="entry name" value="DeoC"/>
    <property type="match status" value="1"/>
</dbReference>
<dbReference type="SUPFAM" id="SSF51569">
    <property type="entry name" value="Aldolase"/>
    <property type="match status" value="1"/>
</dbReference>
<proteinExistence type="inferred from homology"/>
<reference key="1">
    <citation type="journal article" date="2009" name="J. Bacteriol.">
        <title>Role of conjugative elements in the evolution of the multidrug-resistant pandemic clone Streptococcus pneumoniae Spain23F ST81.</title>
        <authorList>
            <person name="Croucher N.J."/>
            <person name="Walker D."/>
            <person name="Romero P."/>
            <person name="Lennard N."/>
            <person name="Paterson G.K."/>
            <person name="Bason N.C."/>
            <person name="Mitchell A.M."/>
            <person name="Quail M.A."/>
            <person name="Andrew P.W."/>
            <person name="Parkhill J."/>
            <person name="Bentley S.D."/>
            <person name="Mitchell T.J."/>
        </authorList>
    </citation>
    <scope>NUCLEOTIDE SEQUENCE [LARGE SCALE GENOMIC DNA]</scope>
    <source>
        <strain>ATCC 700669 / Spain 23F-1</strain>
    </source>
</reference>
<organism>
    <name type="scientific">Streptococcus pneumoniae (strain ATCC 700669 / Spain 23F-1)</name>
    <dbReference type="NCBI Taxonomy" id="561276"/>
    <lineage>
        <taxon>Bacteria</taxon>
        <taxon>Bacillati</taxon>
        <taxon>Bacillota</taxon>
        <taxon>Bacilli</taxon>
        <taxon>Lactobacillales</taxon>
        <taxon>Streptococcaceae</taxon>
        <taxon>Streptococcus</taxon>
    </lineage>
</organism>
<sequence>MKLNKYIDHTLLKQDAKKKQIDSLLSEAREYGFASVCVNPTWVEHAKKGLEGTDVKVCTVVGFPLGATTSTVKAFETKEAIQNGADEIDMVINVGALKSGDLALVESDIRAVVEASGDKLVKVIIEACLLTDQEKVLACQLAQKAGADFVKTSTGFSTGGATIADVRLMRETVGPDMGVKAAGGARSYADALTFVEAGATRIGTSAGVAILKGELADGDY</sequence>
<name>DEOC_STRPJ</name>
<comment type="function">
    <text evidence="1">Catalyzes a reversible aldol reaction between acetaldehyde and D-glyceraldehyde 3-phosphate to generate 2-deoxy-D-ribose 5-phosphate.</text>
</comment>
<comment type="catalytic activity">
    <reaction evidence="1">
        <text>2-deoxy-D-ribose 5-phosphate = D-glyceraldehyde 3-phosphate + acetaldehyde</text>
        <dbReference type="Rhea" id="RHEA:12821"/>
        <dbReference type="ChEBI" id="CHEBI:15343"/>
        <dbReference type="ChEBI" id="CHEBI:59776"/>
        <dbReference type="ChEBI" id="CHEBI:62877"/>
        <dbReference type="EC" id="4.1.2.4"/>
    </reaction>
</comment>
<comment type="pathway">
    <text evidence="1">Carbohydrate degradation; 2-deoxy-D-ribose 1-phosphate degradation; D-glyceraldehyde 3-phosphate and acetaldehyde from 2-deoxy-alpha-D-ribose 1-phosphate: step 2/2.</text>
</comment>
<comment type="subcellular location">
    <subcellularLocation>
        <location evidence="1">Cytoplasm</location>
    </subcellularLocation>
</comment>
<comment type="similarity">
    <text evidence="1">Belongs to the DeoC/FbaB aldolase family. DeoC type 1 subfamily.</text>
</comment>